<evidence type="ECO:0000250" key="1">
    <source>
        <dbReference type="UniProtKB" id="P02893"/>
    </source>
</evidence>
<evidence type="ECO:0000250" key="2">
    <source>
        <dbReference type="UniProtKB" id="P19597"/>
    </source>
</evidence>
<evidence type="ECO:0000250" key="3">
    <source>
        <dbReference type="UniProtKB" id="P23093"/>
    </source>
</evidence>
<evidence type="ECO:0000250" key="4">
    <source>
        <dbReference type="UniProtKB" id="Q7K740"/>
    </source>
</evidence>
<evidence type="ECO:0000255" key="5"/>
<evidence type="ECO:0000255" key="6">
    <source>
        <dbReference type="PROSITE-ProRule" id="PRU00210"/>
    </source>
</evidence>
<evidence type="ECO:0000256" key="7">
    <source>
        <dbReference type="SAM" id="MobiDB-lite"/>
    </source>
</evidence>
<evidence type="ECO:0000269" key="8">
    <source>
    </source>
</evidence>
<evidence type="ECO:0000303" key="9">
    <source>
    </source>
</evidence>
<evidence type="ECO:0000305" key="10"/>
<evidence type="ECO:0000305" key="11">
    <source>
    </source>
</evidence>
<accession>P06914</accession>
<organism>
    <name type="scientific">Plasmodium yoelii yoelii</name>
    <dbReference type="NCBI Taxonomy" id="73239"/>
    <lineage>
        <taxon>Eukaryota</taxon>
        <taxon>Sar</taxon>
        <taxon>Alveolata</taxon>
        <taxon>Apicomplexa</taxon>
        <taxon>Aconoidasida</taxon>
        <taxon>Haemosporida</taxon>
        <taxon>Plasmodiidae</taxon>
        <taxon>Plasmodium</taxon>
        <taxon>Plasmodium (Vinckeia)</taxon>
    </lineage>
</organism>
<sequence>MKKCTILVVASLLLVDSLLPGYGQNKSVQAQRNLNELCYNEENDNKLYHVLNSKNGKIYNRNIVNRLLGDALNGKPEEKKDDPPKDGNKDDLPKEEKKDDLPKEEKKDDPPKDPKKDDPPKEAQNKLNQPVVADENVDQGPGAPQGPGAPQGPGAPQGPGAPQGPGAPQGPGAPQGPGAPQGPGAPQGPGAPQGPGAPQGPGAPQGPGAPQGPGAPQGPGAPQGPGAPQEPPQQPPQQPPQQPPQQPPQQPPQQPPQQPRPQPDGNNNNNNNNGNNNEDSYVPSAEQILEFVKQISSQLTEEWSQCSVTCGSGVRVRKRKNVNKQPENLTLEDIDTEICKMDKCSSIFNIVSNSLGFVILLVLVFFN</sequence>
<gene>
    <name evidence="9" type="primary">CSP</name>
</gene>
<name>CSP_PLAYO</name>
<dbReference type="EMBL" id="J02695">
    <property type="protein sequence ID" value="AAA29558.1"/>
    <property type="molecule type" value="Genomic_DNA"/>
</dbReference>
<dbReference type="EMBL" id="M18821">
    <property type="protein sequence ID" value="AAA29559.1"/>
    <property type="molecule type" value="Genomic_DNA"/>
</dbReference>
<dbReference type="EMBL" id="M22698">
    <property type="protein sequence ID" value="AAA29560.1"/>
    <property type="molecule type" value="Genomic_DNA"/>
</dbReference>
<dbReference type="SMR" id="P06914"/>
<dbReference type="IntAct" id="P06914">
    <property type="interactions" value="5"/>
</dbReference>
<dbReference type="GlyCosmos" id="P06914">
    <property type="glycosylation" value="1 site, No reported glycans"/>
</dbReference>
<dbReference type="GO" id="GO:0009986">
    <property type="term" value="C:cell surface"/>
    <property type="evidence" value="ECO:0007669"/>
    <property type="project" value="InterPro"/>
</dbReference>
<dbReference type="GO" id="GO:0005737">
    <property type="term" value="C:cytoplasm"/>
    <property type="evidence" value="ECO:0007669"/>
    <property type="project" value="UniProtKB-SubCell"/>
</dbReference>
<dbReference type="GO" id="GO:0005886">
    <property type="term" value="C:plasma membrane"/>
    <property type="evidence" value="ECO:0007669"/>
    <property type="project" value="UniProtKB-SubCell"/>
</dbReference>
<dbReference type="GO" id="GO:0098552">
    <property type="term" value="C:side of membrane"/>
    <property type="evidence" value="ECO:0007669"/>
    <property type="project" value="UniProtKB-KW"/>
</dbReference>
<dbReference type="Gene3D" id="2.20.100.10">
    <property type="entry name" value="Thrombospondin type-1 (TSP1) repeat"/>
    <property type="match status" value="1"/>
</dbReference>
<dbReference type="InterPro" id="IPR003067">
    <property type="entry name" value="Crcmsprzoite"/>
</dbReference>
<dbReference type="InterPro" id="IPR000884">
    <property type="entry name" value="TSP1_rpt"/>
</dbReference>
<dbReference type="InterPro" id="IPR036383">
    <property type="entry name" value="TSP1_rpt_sf"/>
</dbReference>
<dbReference type="Pfam" id="PF00090">
    <property type="entry name" value="TSP_1"/>
    <property type="match status" value="1"/>
</dbReference>
<dbReference type="PRINTS" id="PR01303">
    <property type="entry name" value="CRCMSPRZOITE"/>
</dbReference>
<dbReference type="SMART" id="SM00209">
    <property type="entry name" value="TSP1"/>
    <property type="match status" value="1"/>
</dbReference>
<dbReference type="SUPFAM" id="SSF82895">
    <property type="entry name" value="TSP-1 type 1 repeat"/>
    <property type="match status" value="1"/>
</dbReference>
<dbReference type="PROSITE" id="PS50092">
    <property type="entry name" value="TSP1"/>
    <property type="match status" value="1"/>
</dbReference>
<protein>
    <recommendedName>
        <fullName evidence="9">Circumsporozoite protein</fullName>
        <shortName evidence="1">CS</shortName>
    </recommendedName>
    <component>
        <recommendedName>
            <fullName evidence="10">Circumsporozoite protein C-terminus</fullName>
        </recommendedName>
    </component>
</protein>
<proteinExistence type="inferred from homology"/>
<reference key="1">
    <citation type="journal article" date="1987" name="J. Biol. Chem.">
        <title>Structure of the gene encoding the circumsporozoite protein of Plasmodium yoelii. A rodent model for examining antimalarial sporozoite vaccines.</title>
        <authorList>
            <person name="Lal A.A."/>
            <person name="de la Cruz V.F."/>
            <person name="Welsh J.A."/>
            <person name="Charoenvit Y."/>
            <person name="Maloy W.L."/>
            <person name="McCutchan T.F."/>
        </authorList>
    </citation>
    <scope>NUCLEOTIDE SEQUENCE [GENOMIC DNA]</scope>
    <scope>REPEATS</scope>
</reference>
<reference key="2">
    <citation type="journal article" date="1988" name="Mol. Biochem. Parasitol.">
        <title>Variation among circumsporozoite protein genes from rodent malarias.</title>
        <authorList>
            <person name="de la Cruz V.F."/>
            <person name="Lal A.A."/>
            <person name="McCutchan T.F."/>
        </authorList>
    </citation>
    <scope>NUCLEOTIDE SEQUENCE [GENOMIC DNA] OF 1-140 AND 260-367</scope>
    <scope>POLYMORPHISM</scope>
</reference>
<keyword id="KW-1003">Cell membrane</keyword>
<keyword id="KW-0963">Cytoplasm</keyword>
<keyword id="KW-1015">Disulfide bond</keyword>
<keyword id="KW-0325">Glycoprotein</keyword>
<keyword id="KW-0336">GPI-anchor</keyword>
<keyword id="KW-0449">Lipoprotein</keyword>
<keyword id="KW-0461">Malaria</keyword>
<keyword id="KW-0472">Membrane</keyword>
<keyword id="KW-0677">Repeat</keyword>
<keyword id="KW-0732">Signal</keyword>
<keyword id="KW-0748">Sporozoite</keyword>
<comment type="function">
    <text evidence="1 3">Essential sporozoite protein (By similarity). In the mosquito vector, required for sporozoite development in the oocyst, migration through the vector hemolymph and entry into the vector salivary glands (By similarity). In the vertebrate host, required for sporozoite migration through the host dermis and infection of host hepatocytes (By similarity). Binds to highly sulfated heparan sulfate proteoglycans (HSPGs) on the surface of host hepatocytes (By similarity).</text>
</comment>
<comment type="function">
    <molecule>Circumsporozoite protein C-terminus</molecule>
    <text evidence="3">In the vertebrate host, binds to highly sulfated heparan sulfate proteoglycans (HSPGs) on the surface of host hepatocytes and is required for sporozoite invasion of the host hepatocytes.</text>
</comment>
<comment type="subcellular location">
    <subcellularLocation>
        <location evidence="2">Cell membrane</location>
        <topology evidence="5">Lipid-anchor</topology>
        <topology evidence="5">GPI-anchor</topology>
    </subcellularLocation>
    <subcellularLocation>
        <location evidence="3">Cytoplasm</location>
    </subcellularLocation>
    <text evidence="3">Localizes to the cytoplasm and the cell membrane in oocysts at day 6 post infection and then gradually distributes over the entire cell surface of the sporoblast and the budding sporozoites.</text>
</comment>
<comment type="domain">
    <text evidence="3 4">The N-terminus is involved in the initial binding to heparan sulfate proteoglycans (HSPGs) on the surface of host hepatocytes (By similarity). The N-terminus masks the TSP type-1 (TSR) domain which maintains the sporozoites in a migratory state, enabling them to complete their journey to the salivary gland in the mosquito vector and then to the host liver. The unmasking of the TSP type-1 (TSR) domain when the sporozoite interacts with the host hepatocyte also protects sporozoites from host antibodies (By similarity).</text>
</comment>
<comment type="domain">
    <text evidence="3">The TSP type-1 (TSR) domain is required for sporozoite development and invasion. CSP has two conformational states, an adhesive conformation in which the TSP type-1 (TSR) domain is exposed and a nonadhesive conformation in which the TSR is masked by the N-terminus. TSR-exposed conformation occurs during sporozoite development in the oocyst in the mosquito vector and during host hepatocyte invasion. TSR-masked conformation occurs during sporozoite migration through the hemolymph to salivary glands in the mosquito vector and in the host dermis.</text>
</comment>
<comment type="domain">
    <text evidence="3">The GPI-anchor is essential for cell membrane localization and for sporozoite formation inside the oocyst.</text>
</comment>
<comment type="PTM">
    <text evidence="1 3">During host cell invasion, proteolytically cleaved at the cell membrane in the region I by a papain-like cysteine protease of parasite origin (By similarity). Cleavage is triggered by the sporozoite contact with highly sulfated heparan sulfate proteoglycans (HSPGs) present on the host hepatocyte cell surface (By similarity). Cleavage exposes the TSP type-1 (TSR) domain and is required for productive invasion of host hepatocytes but not for adhesion to the host cell membrane (By similarity). Cleavage is dispensable for sporozoite development in the oocyst, motility and for traversal of host and vector cells (By similarity).</text>
</comment>
<comment type="PTM">
    <text evidence="2">O-glycosylated; maybe by POFUT2.</text>
</comment>
<comment type="polymorphism">
    <text evidence="8">The sequence of the repeats varies across Plasmodium species and strains.</text>
</comment>
<comment type="similarity">
    <text evidence="10">Belongs to the plasmodium circumsporozoite protein family.</text>
</comment>
<feature type="signal peptide" evidence="5">
    <location>
        <begin position="1"/>
        <end position="23"/>
    </location>
</feature>
<feature type="chain" id="PRO_0000024536" description="Circumsporozoite protein" evidence="5">
    <location>
        <begin position="24"/>
        <end position="344"/>
    </location>
</feature>
<feature type="chain" id="PRO_0000455509" description="Circumsporozoite protein C-terminus" evidence="3">
    <location>
        <begin status="unknown"/>
        <end position="344"/>
    </location>
</feature>
<feature type="propeptide" id="PRO_0000455510" description="Removed in mature form" evidence="5">
    <location>
        <begin position="345"/>
        <end position="367"/>
    </location>
</feature>
<feature type="repeat" description="1-1" evidence="11">
    <location>
        <begin position="139"/>
        <end position="144"/>
    </location>
</feature>
<feature type="repeat" description="1-2" evidence="11">
    <location>
        <begin position="145"/>
        <end position="150"/>
    </location>
</feature>
<feature type="repeat" description="1-3" evidence="11">
    <location>
        <begin position="151"/>
        <end position="156"/>
    </location>
</feature>
<feature type="repeat" description="1-4" evidence="11">
    <location>
        <begin position="157"/>
        <end position="162"/>
    </location>
</feature>
<feature type="repeat" description="1-5" evidence="11">
    <location>
        <begin position="163"/>
        <end position="168"/>
    </location>
</feature>
<feature type="repeat" description="1-6" evidence="11">
    <location>
        <begin position="169"/>
        <end position="174"/>
    </location>
</feature>
<feature type="repeat" description="1-7" evidence="11">
    <location>
        <begin position="175"/>
        <end position="180"/>
    </location>
</feature>
<feature type="repeat" description="1-8" evidence="11">
    <location>
        <begin position="181"/>
        <end position="186"/>
    </location>
</feature>
<feature type="repeat" description="1-9" evidence="11">
    <location>
        <begin position="187"/>
        <end position="192"/>
    </location>
</feature>
<feature type="repeat" description="1-10" evidence="11">
    <location>
        <begin position="193"/>
        <end position="198"/>
    </location>
</feature>
<feature type="repeat" description="1-11" evidence="11">
    <location>
        <begin position="199"/>
        <end position="204"/>
    </location>
</feature>
<feature type="repeat" description="1-12" evidence="11">
    <location>
        <begin position="205"/>
        <end position="210"/>
    </location>
</feature>
<feature type="repeat" description="1-13" evidence="11">
    <location>
        <begin position="211"/>
        <end position="216"/>
    </location>
</feature>
<feature type="repeat" description="1-14" evidence="11">
    <location>
        <begin position="217"/>
        <end position="222"/>
    </location>
</feature>
<feature type="repeat" description="1-15" evidence="11">
    <location>
        <begin position="223"/>
        <end position="228"/>
    </location>
</feature>
<feature type="repeat" description="2-1; approximate" evidence="11">
    <location>
        <begin position="229"/>
        <end position="232"/>
    </location>
</feature>
<feature type="repeat" description="2-2" evidence="11">
    <location>
        <begin position="233"/>
        <end position="236"/>
    </location>
</feature>
<feature type="repeat" description="2-3" evidence="11">
    <location>
        <begin position="237"/>
        <end position="240"/>
    </location>
</feature>
<feature type="repeat" description="2-4" evidence="11">
    <location>
        <begin position="241"/>
        <end position="244"/>
    </location>
</feature>
<feature type="repeat" description="2-5" evidence="11">
    <location>
        <begin position="245"/>
        <end position="248"/>
    </location>
</feature>
<feature type="repeat" description="2-6" evidence="11">
    <location>
        <begin position="249"/>
        <end position="252"/>
    </location>
</feature>
<feature type="repeat" description="2-7" evidence="11">
    <location>
        <begin position="253"/>
        <end position="256"/>
    </location>
</feature>
<feature type="repeat" description="2-8; approximate" evidence="11">
    <location>
        <begin position="257"/>
        <end position="260"/>
    </location>
</feature>
<feature type="domain" description="TSP type-1" evidence="6">
    <location>
        <begin position="294"/>
        <end position="345"/>
    </location>
</feature>
<feature type="region of interest" description="Disordered" evidence="7">
    <location>
        <begin position="72"/>
        <end position="281"/>
    </location>
</feature>
<feature type="region of interest" description="Required for the binding to heparan sulfate proteoglycans (HSPGs) on the surface of host hepatocytes" evidence="4">
    <location>
        <begin position="115"/>
        <end position="121"/>
    </location>
</feature>
<feature type="region of interest" description="Region I; contains the proteolytic cleavage site" evidence="3">
    <location>
        <begin position="126"/>
        <end position="130"/>
    </location>
</feature>
<feature type="region of interest" description="15 X 6 AA tandem repeats of Q-G-P-G-A-P" evidence="11">
    <location>
        <begin position="139"/>
        <end position="228"/>
    </location>
</feature>
<feature type="region of interest" description="8 X 4 AA approximate tandem repeats of Q-Q-P-P" evidence="11">
    <location>
        <begin position="229"/>
        <end position="260"/>
    </location>
</feature>
<feature type="compositionally biased region" description="Basic and acidic residues" evidence="7">
    <location>
        <begin position="75"/>
        <end position="124"/>
    </location>
</feature>
<feature type="compositionally biased region" description="Gly residues" evidence="7">
    <location>
        <begin position="143"/>
        <end position="223"/>
    </location>
</feature>
<feature type="compositionally biased region" description="Pro residues" evidence="7">
    <location>
        <begin position="228"/>
        <end position="262"/>
    </location>
</feature>
<feature type="compositionally biased region" description="Low complexity" evidence="7">
    <location>
        <begin position="263"/>
        <end position="277"/>
    </location>
</feature>
<feature type="lipid moiety-binding region" description="GPI-anchor amidated cysteine" evidence="5">
    <location>
        <position position="344"/>
    </location>
</feature>
<feature type="glycosylation site" description="O-linked (Fuc) threonine" evidence="2">
    <location>
        <position position="309"/>
    </location>
</feature>
<feature type="disulfide bond" evidence="4">
    <location>
        <begin position="306"/>
        <end position="339"/>
    </location>
</feature>
<feature type="disulfide bond" evidence="4">
    <location>
        <begin position="310"/>
        <end position="344"/>
    </location>
</feature>